<gene>
    <name evidence="1" type="primary">rpsF</name>
    <name type="ordered locus">AB57_2509</name>
</gene>
<comment type="function">
    <text evidence="1">Binds together with bS18 to 16S ribosomal RNA.</text>
</comment>
<comment type="similarity">
    <text evidence="1">Belongs to the bacterial ribosomal protein bS6 family.</text>
</comment>
<feature type="chain" id="PRO_1000120692" description="Small ribosomal subunit protein bS6">
    <location>
        <begin position="1"/>
        <end position="127"/>
    </location>
</feature>
<feature type="strand" evidence="3">
    <location>
        <begin position="2"/>
        <end position="10"/>
    </location>
</feature>
<feature type="helix" evidence="3">
    <location>
        <begin position="13"/>
        <end position="17"/>
    </location>
</feature>
<feature type="helix" evidence="3">
    <location>
        <begin position="18"/>
        <end position="32"/>
    </location>
</feature>
<feature type="strand" evidence="3">
    <location>
        <begin position="36"/>
        <end position="46"/>
    </location>
</feature>
<feature type="strand" evidence="3">
    <location>
        <begin position="51"/>
        <end position="53"/>
    </location>
</feature>
<feature type="strand" evidence="3">
    <location>
        <begin position="56"/>
        <end position="66"/>
    </location>
</feature>
<feature type="helix" evidence="3">
    <location>
        <begin position="68"/>
        <end position="80"/>
    </location>
</feature>
<feature type="strand" evidence="3">
    <location>
        <begin position="82"/>
        <end position="94"/>
    </location>
</feature>
<sequence>MRHYEIVLLVHPDQSDQVVGMVERYISQIKEADGQIHRLEDWGRRQLAYPINKIHKAHYILMNVECGQSTLDELEELFRYNDAIIRNLIIRREHAITEESLLAKSAEEKRARKAQREEAQQVAQEAE</sequence>
<protein>
    <recommendedName>
        <fullName evidence="1">Small ribosomal subunit protein bS6</fullName>
    </recommendedName>
    <alternativeName>
        <fullName evidence="2">30S ribosomal protein S6</fullName>
    </alternativeName>
</protein>
<evidence type="ECO:0000255" key="1">
    <source>
        <dbReference type="HAMAP-Rule" id="MF_00360"/>
    </source>
</evidence>
<evidence type="ECO:0000305" key="2"/>
<evidence type="ECO:0007829" key="3">
    <source>
        <dbReference type="PDB" id="7M4U"/>
    </source>
</evidence>
<dbReference type="EMBL" id="CP001182">
    <property type="protein sequence ID" value="ACJ42618.1"/>
    <property type="molecule type" value="Genomic_DNA"/>
</dbReference>
<dbReference type="RefSeq" id="WP_001216679.1">
    <property type="nucleotide sequence ID" value="NC_011586.2"/>
</dbReference>
<dbReference type="PDB" id="6V39">
    <property type="method" value="EM"/>
    <property type="resolution" value="3.04 A"/>
    <property type="chains" value="f=1-127"/>
</dbReference>
<dbReference type="PDB" id="6V3A">
    <property type="method" value="EM"/>
    <property type="resolution" value="2.82 A"/>
    <property type="chains" value="f=1-127"/>
</dbReference>
<dbReference type="PDB" id="6V3B">
    <property type="method" value="EM"/>
    <property type="resolution" value="2.91 A"/>
    <property type="chains" value="f=1-127"/>
</dbReference>
<dbReference type="PDB" id="6V3E">
    <property type="method" value="EM"/>
    <property type="resolution" value="4.40 A"/>
    <property type="chains" value="f=1-127"/>
</dbReference>
<dbReference type="PDB" id="7M4U">
    <property type="method" value="EM"/>
    <property type="resolution" value="2.71 A"/>
    <property type="chains" value="f=1-127"/>
</dbReference>
<dbReference type="PDB" id="7M4W">
    <property type="method" value="EM"/>
    <property type="resolution" value="2.55 A"/>
    <property type="chains" value="f=1-127"/>
</dbReference>
<dbReference type="PDB" id="7M4X">
    <property type="method" value="EM"/>
    <property type="resolution" value="2.66 A"/>
    <property type="chains" value="f=1-127"/>
</dbReference>
<dbReference type="PDB" id="7M4Y">
    <property type="method" value="EM"/>
    <property type="resolution" value="2.50 A"/>
    <property type="chains" value="f=1-127"/>
</dbReference>
<dbReference type="PDB" id="7M4Z">
    <property type="method" value="EM"/>
    <property type="resolution" value="2.92 A"/>
    <property type="chains" value="f=1-127"/>
</dbReference>
<dbReference type="PDB" id="7RYF">
    <property type="method" value="EM"/>
    <property type="resolution" value="2.65 A"/>
    <property type="chains" value="f=1-127"/>
</dbReference>
<dbReference type="PDB" id="7RYG">
    <property type="method" value="EM"/>
    <property type="resolution" value="2.38 A"/>
    <property type="chains" value="f=1-127"/>
</dbReference>
<dbReference type="PDB" id="7RYH">
    <property type="method" value="EM"/>
    <property type="resolution" value="2.43 A"/>
    <property type="chains" value="f=1-127"/>
</dbReference>
<dbReference type="PDB" id="7UVV">
    <property type="method" value="EM"/>
    <property type="resolution" value="2.50 A"/>
    <property type="chains" value="f=1-127"/>
</dbReference>
<dbReference type="PDB" id="7UVW">
    <property type="method" value="EM"/>
    <property type="resolution" value="2.37 A"/>
    <property type="chains" value="f=1-127"/>
</dbReference>
<dbReference type="PDB" id="7UVX">
    <property type="method" value="EM"/>
    <property type="resolution" value="2.35 A"/>
    <property type="chains" value="f=1-127"/>
</dbReference>
<dbReference type="PDB" id="7UVY">
    <property type="method" value="EM"/>
    <property type="resolution" value="2.39 A"/>
    <property type="chains" value="f=1-127"/>
</dbReference>
<dbReference type="PDB" id="7UVZ">
    <property type="method" value="EM"/>
    <property type="resolution" value="2.21 A"/>
    <property type="chains" value="f=1-127"/>
</dbReference>
<dbReference type="PDB" id="7UW1">
    <property type="method" value="EM"/>
    <property type="resolution" value="2.21 A"/>
    <property type="chains" value="f=1-127"/>
</dbReference>
<dbReference type="PDBsum" id="6V39"/>
<dbReference type="PDBsum" id="6V3A"/>
<dbReference type="PDBsum" id="6V3B"/>
<dbReference type="PDBsum" id="6V3E"/>
<dbReference type="PDBsum" id="7M4U"/>
<dbReference type="PDBsum" id="7M4W"/>
<dbReference type="PDBsum" id="7M4X"/>
<dbReference type="PDBsum" id="7M4Y"/>
<dbReference type="PDBsum" id="7M4Z"/>
<dbReference type="PDBsum" id="7RYF"/>
<dbReference type="PDBsum" id="7RYG"/>
<dbReference type="PDBsum" id="7RYH"/>
<dbReference type="PDBsum" id="7UVV"/>
<dbReference type="PDBsum" id="7UVW"/>
<dbReference type="PDBsum" id="7UVX"/>
<dbReference type="PDBsum" id="7UVY"/>
<dbReference type="PDBsum" id="7UVZ"/>
<dbReference type="PDBsum" id="7UW1"/>
<dbReference type="EMDB" id="EMD-21030"/>
<dbReference type="EMDB" id="EMD-21031"/>
<dbReference type="EMDB" id="EMD-21032"/>
<dbReference type="EMDB" id="EMD-21034"/>
<dbReference type="EMDB" id="EMD-23666"/>
<dbReference type="EMDB" id="EMD-23668"/>
<dbReference type="EMDB" id="EMD-23669"/>
<dbReference type="EMDB" id="EMD-23670"/>
<dbReference type="EMDB" id="EMD-23671"/>
<dbReference type="EMDB" id="EMD-24738"/>
<dbReference type="EMDB" id="EMD-24739"/>
<dbReference type="EMDB" id="EMD-24740"/>
<dbReference type="EMDB" id="EMD-26817"/>
<dbReference type="EMDB" id="EMD-26818"/>
<dbReference type="EMDB" id="EMD-26819"/>
<dbReference type="EMDB" id="EMD-26820"/>
<dbReference type="EMDB" id="EMD-26821"/>
<dbReference type="EMDB" id="EMD-26822"/>
<dbReference type="SMR" id="B7IBC1"/>
<dbReference type="IntAct" id="B7IBC1">
    <property type="interactions" value="1"/>
</dbReference>
<dbReference type="GeneID" id="92894413"/>
<dbReference type="KEGG" id="abn:AB57_2509"/>
<dbReference type="HOGENOM" id="CLU_113441_6_1_6"/>
<dbReference type="Proteomes" id="UP000007094">
    <property type="component" value="Chromosome"/>
</dbReference>
<dbReference type="GO" id="GO:0022627">
    <property type="term" value="C:cytosolic small ribosomal subunit"/>
    <property type="evidence" value="ECO:0007669"/>
    <property type="project" value="TreeGrafter"/>
</dbReference>
<dbReference type="GO" id="GO:0070181">
    <property type="term" value="F:small ribosomal subunit rRNA binding"/>
    <property type="evidence" value="ECO:0007669"/>
    <property type="project" value="TreeGrafter"/>
</dbReference>
<dbReference type="GO" id="GO:0003735">
    <property type="term" value="F:structural constituent of ribosome"/>
    <property type="evidence" value="ECO:0007669"/>
    <property type="project" value="InterPro"/>
</dbReference>
<dbReference type="GO" id="GO:0006412">
    <property type="term" value="P:translation"/>
    <property type="evidence" value="ECO:0007669"/>
    <property type="project" value="UniProtKB-UniRule"/>
</dbReference>
<dbReference type="CDD" id="cd00473">
    <property type="entry name" value="bS6"/>
    <property type="match status" value="1"/>
</dbReference>
<dbReference type="FunFam" id="3.30.70.60:FF:000003">
    <property type="entry name" value="30S ribosomal protein S6"/>
    <property type="match status" value="1"/>
</dbReference>
<dbReference type="Gene3D" id="3.30.70.60">
    <property type="match status" value="1"/>
</dbReference>
<dbReference type="HAMAP" id="MF_00360">
    <property type="entry name" value="Ribosomal_bS6"/>
    <property type="match status" value="1"/>
</dbReference>
<dbReference type="InterPro" id="IPR000529">
    <property type="entry name" value="Ribosomal_bS6"/>
</dbReference>
<dbReference type="InterPro" id="IPR020815">
    <property type="entry name" value="Ribosomal_bS6_CS"/>
</dbReference>
<dbReference type="InterPro" id="IPR035980">
    <property type="entry name" value="Ribosomal_bS6_sf"/>
</dbReference>
<dbReference type="InterPro" id="IPR020814">
    <property type="entry name" value="Ribosomal_S6_plastid/chlpt"/>
</dbReference>
<dbReference type="InterPro" id="IPR014717">
    <property type="entry name" value="Transl_elong_EF1B/ribsomal_bS6"/>
</dbReference>
<dbReference type="NCBIfam" id="TIGR00166">
    <property type="entry name" value="S6"/>
    <property type="match status" value="1"/>
</dbReference>
<dbReference type="PANTHER" id="PTHR21011">
    <property type="entry name" value="MITOCHONDRIAL 28S RIBOSOMAL PROTEIN S6"/>
    <property type="match status" value="1"/>
</dbReference>
<dbReference type="PANTHER" id="PTHR21011:SF1">
    <property type="entry name" value="SMALL RIBOSOMAL SUBUNIT PROTEIN BS6M"/>
    <property type="match status" value="1"/>
</dbReference>
<dbReference type="Pfam" id="PF01250">
    <property type="entry name" value="Ribosomal_S6"/>
    <property type="match status" value="1"/>
</dbReference>
<dbReference type="SUPFAM" id="SSF54995">
    <property type="entry name" value="Ribosomal protein S6"/>
    <property type="match status" value="1"/>
</dbReference>
<dbReference type="PROSITE" id="PS01048">
    <property type="entry name" value="RIBOSOMAL_S6"/>
    <property type="match status" value="1"/>
</dbReference>
<keyword id="KW-0002">3D-structure</keyword>
<keyword id="KW-0687">Ribonucleoprotein</keyword>
<keyword id="KW-0689">Ribosomal protein</keyword>
<keyword id="KW-0694">RNA-binding</keyword>
<keyword id="KW-0699">rRNA-binding</keyword>
<accession>B7IBC1</accession>
<organism>
    <name type="scientific">Acinetobacter baumannii (strain AB0057)</name>
    <dbReference type="NCBI Taxonomy" id="480119"/>
    <lineage>
        <taxon>Bacteria</taxon>
        <taxon>Pseudomonadati</taxon>
        <taxon>Pseudomonadota</taxon>
        <taxon>Gammaproteobacteria</taxon>
        <taxon>Moraxellales</taxon>
        <taxon>Moraxellaceae</taxon>
        <taxon>Acinetobacter</taxon>
        <taxon>Acinetobacter calcoaceticus/baumannii complex</taxon>
    </lineage>
</organism>
<reference key="1">
    <citation type="journal article" date="2008" name="J. Bacteriol.">
        <title>Comparative genome sequence analysis of multidrug-resistant Acinetobacter baumannii.</title>
        <authorList>
            <person name="Adams M.D."/>
            <person name="Goglin K."/>
            <person name="Molyneaux N."/>
            <person name="Hujer K.M."/>
            <person name="Lavender H."/>
            <person name="Jamison J.J."/>
            <person name="MacDonald I.J."/>
            <person name="Martin K.M."/>
            <person name="Russo T."/>
            <person name="Campagnari A.A."/>
            <person name="Hujer A.M."/>
            <person name="Bonomo R.A."/>
            <person name="Gill S.R."/>
        </authorList>
    </citation>
    <scope>NUCLEOTIDE SEQUENCE [LARGE SCALE GENOMIC DNA]</scope>
    <source>
        <strain>AB0057</strain>
    </source>
</reference>
<proteinExistence type="evidence at protein level"/>
<name>RS6_ACIB5</name>